<proteinExistence type="evidence at protein level"/>
<gene>
    <name type="primary">Gpr174</name>
    <name type="synonym">Gm376</name>
</gene>
<name>GP174_MOUSE</name>
<accession>Q3U507</accession>
<sequence length="335" mass="38761">MTDNFTCNKTDGDNTDFRYFIYAVTYTVILVPGLIGNILALWVFYGYMKETKRAVVFMINLAIADLLQILSLPLRIFYYLNHDWPFGPGLCMFCFYLKYVNMYASIYFLVCISVRRFWFLMYPFRFNDCKQKYDLYISIIGWLIICLACLLFPLLRTNDDTPGNRTKCFVDLPIRNVNLAQSVAMITIGEVVGFVTPLMIVLYCTWKTALSLQNKYPISQHLGEKKKALKMILTCAGVFLVCFVPYHFSFPLDFLVKSNEIKSCFARRVILIFHSVALCLASLNSCLDPVIYYFTTNEFRRRLSRQDLPDNIQLHTKSYKIASNHATSTVAAELC</sequence>
<organism>
    <name type="scientific">Mus musculus</name>
    <name type="common">Mouse</name>
    <dbReference type="NCBI Taxonomy" id="10090"/>
    <lineage>
        <taxon>Eukaryota</taxon>
        <taxon>Metazoa</taxon>
        <taxon>Chordata</taxon>
        <taxon>Craniata</taxon>
        <taxon>Vertebrata</taxon>
        <taxon>Euteleostomi</taxon>
        <taxon>Mammalia</taxon>
        <taxon>Eutheria</taxon>
        <taxon>Euarchontoglires</taxon>
        <taxon>Glires</taxon>
        <taxon>Rodentia</taxon>
        <taxon>Myomorpha</taxon>
        <taxon>Muroidea</taxon>
        <taxon>Muridae</taxon>
        <taxon>Murinae</taxon>
        <taxon>Mus</taxon>
        <taxon>Mus</taxon>
    </lineage>
</organism>
<evidence type="ECO:0000250" key="1">
    <source>
        <dbReference type="UniProtKB" id="Q9BXC1"/>
    </source>
</evidence>
<evidence type="ECO:0000255" key="2"/>
<evidence type="ECO:0000255" key="3">
    <source>
        <dbReference type="PROSITE-ProRule" id="PRU00521"/>
    </source>
</evidence>
<evidence type="ECO:0000269" key="4">
    <source>
    </source>
</evidence>
<evidence type="ECO:0000269" key="5">
    <source>
    </source>
</evidence>
<evidence type="ECO:0000269" key="6">
    <source>
    </source>
</evidence>
<evidence type="ECO:0000269" key="7">
    <source>
    </source>
</evidence>
<evidence type="ECO:0000269" key="8">
    <source>
    </source>
</evidence>
<evidence type="ECO:0000269" key="9">
    <source>
    </source>
</evidence>
<reference key="1">
    <citation type="journal article" date="2005" name="Science">
        <title>The transcriptional landscape of the mammalian genome.</title>
        <authorList>
            <person name="Carninci P."/>
            <person name="Kasukawa T."/>
            <person name="Katayama S."/>
            <person name="Gough J."/>
            <person name="Frith M.C."/>
            <person name="Maeda N."/>
            <person name="Oyama R."/>
            <person name="Ravasi T."/>
            <person name="Lenhard B."/>
            <person name="Wells C."/>
            <person name="Kodzius R."/>
            <person name="Shimokawa K."/>
            <person name="Bajic V.B."/>
            <person name="Brenner S.E."/>
            <person name="Batalov S."/>
            <person name="Forrest A.R."/>
            <person name="Zavolan M."/>
            <person name="Davis M.J."/>
            <person name="Wilming L.G."/>
            <person name="Aidinis V."/>
            <person name="Allen J.E."/>
            <person name="Ambesi-Impiombato A."/>
            <person name="Apweiler R."/>
            <person name="Aturaliya R.N."/>
            <person name="Bailey T.L."/>
            <person name="Bansal M."/>
            <person name="Baxter L."/>
            <person name="Beisel K.W."/>
            <person name="Bersano T."/>
            <person name="Bono H."/>
            <person name="Chalk A.M."/>
            <person name="Chiu K.P."/>
            <person name="Choudhary V."/>
            <person name="Christoffels A."/>
            <person name="Clutterbuck D.R."/>
            <person name="Crowe M.L."/>
            <person name="Dalla E."/>
            <person name="Dalrymple B.P."/>
            <person name="de Bono B."/>
            <person name="Della Gatta G."/>
            <person name="di Bernardo D."/>
            <person name="Down T."/>
            <person name="Engstrom P."/>
            <person name="Fagiolini M."/>
            <person name="Faulkner G."/>
            <person name="Fletcher C.F."/>
            <person name="Fukushima T."/>
            <person name="Furuno M."/>
            <person name="Futaki S."/>
            <person name="Gariboldi M."/>
            <person name="Georgii-Hemming P."/>
            <person name="Gingeras T.R."/>
            <person name="Gojobori T."/>
            <person name="Green R.E."/>
            <person name="Gustincich S."/>
            <person name="Harbers M."/>
            <person name="Hayashi Y."/>
            <person name="Hensch T.K."/>
            <person name="Hirokawa N."/>
            <person name="Hill D."/>
            <person name="Huminiecki L."/>
            <person name="Iacono M."/>
            <person name="Ikeo K."/>
            <person name="Iwama A."/>
            <person name="Ishikawa T."/>
            <person name="Jakt M."/>
            <person name="Kanapin A."/>
            <person name="Katoh M."/>
            <person name="Kawasawa Y."/>
            <person name="Kelso J."/>
            <person name="Kitamura H."/>
            <person name="Kitano H."/>
            <person name="Kollias G."/>
            <person name="Krishnan S.P."/>
            <person name="Kruger A."/>
            <person name="Kummerfeld S.K."/>
            <person name="Kurochkin I.V."/>
            <person name="Lareau L.F."/>
            <person name="Lazarevic D."/>
            <person name="Lipovich L."/>
            <person name="Liu J."/>
            <person name="Liuni S."/>
            <person name="McWilliam S."/>
            <person name="Madan Babu M."/>
            <person name="Madera M."/>
            <person name="Marchionni L."/>
            <person name="Matsuda H."/>
            <person name="Matsuzawa S."/>
            <person name="Miki H."/>
            <person name="Mignone F."/>
            <person name="Miyake S."/>
            <person name="Morris K."/>
            <person name="Mottagui-Tabar S."/>
            <person name="Mulder N."/>
            <person name="Nakano N."/>
            <person name="Nakauchi H."/>
            <person name="Ng P."/>
            <person name="Nilsson R."/>
            <person name="Nishiguchi S."/>
            <person name="Nishikawa S."/>
            <person name="Nori F."/>
            <person name="Ohara O."/>
            <person name="Okazaki Y."/>
            <person name="Orlando V."/>
            <person name="Pang K.C."/>
            <person name="Pavan W.J."/>
            <person name="Pavesi G."/>
            <person name="Pesole G."/>
            <person name="Petrovsky N."/>
            <person name="Piazza S."/>
            <person name="Reed J."/>
            <person name="Reid J.F."/>
            <person name="Ring B.Z."/>
            <person name="Ringwald M."/>
            <person name="Rost B."/>
            <person name="Ruan Y."/>
            <person name="Salzberg S.L."/>
            <person name="Sandelin A."/>
            <person name="Schneider C."/>
            <person name="Schoenbach C."/>
            <person name="Sekiguchi K."/>
            <person name="Semple C.A."/>
            <person name="Seno S."/>
            <person name="Sessa L."/>
            <person name="Sheng Y."/>
            <person name="Shibata Y."/>
            <person name="Shimada H."/>
            <person name="Shimada K."/>
            <person name="Silva D."/>
            <person name="Sinclair B."/>
            <person name="Sperling S."/>
            <person name="Stupka E."/>
            <person name="Sugiura K."/>
            <person name="Sultana R."/>
            <person name="Takenaka Y."/>
            <person name="Taki K."/>
            <person name="Tammoja K."/>
            <person name="Tan S.L."/>
            <person name="Tang S."/>
            <person name="Taylor M.S."/>
            <person name="Tegner J."/>
            <person name="Teichmann S.A."/>
            <person name="Ueda H.R."/>
            <person name="van Nimwegen E."/>
            <person name="Verardo R."/>
            <person name="Wei C.L."/>
            <person name="Yagi K."/>
            <person name="Yamanishi H."/>
            <person name="Zabarovsky E."/>
            <person name="Zhu S."/>
            <person name="Zimmer A."/>
            <person name="Hide W."/>
            <person name="Bult C."/>
            <person name="Grimmond S.M."/>
            <person name="Teasdale R.D."/>
            <person name="Liu E.T."/>
            <person name="Brusic V."/>
            <person name="Quackenbush J."/>
            <person name="Wahlestedt C."/>
            <person name="Mattick J.S."/>
            <person name="Hume D.A."/>
            <person name="Kai C."/>
            <person name="Sasaki D."/>
            <person name="Tomaru Y."/>
            <person name="Fukuda S."/>
            <person name="Kanamori-Katayama M."/>
            <person name="Suzuki M."/>
            <person name="Aoki J."/>
            <person name="Arakawa T."/>
            <person name="Iida J."/>
            <person name="Imamura K."/>
            <person name="Itoh M."/>
            <person name="Kato T."/>
            <person name="Kawaji H."/>
            <person name="Kawagashira N."/>
            <person name="Kawashima T."/>
            <person name="Kojima M."/>
            <person name="Kondo S."/>
            <person name="Konno H."/>
            <person name="Nakano K."/>
            <person name="Ninomiya N."/>
            <person name="Nishio T."/>
            <person name="Okada M."/>
            <person name="Plessy C."/>
            <person name="Shibata K."/>
            <person name="Shiraki T."/>
            <person name="Suzuki S."/>
            <person name="Tagami M."/>
            <person name="Waki K."/>
            <person name="Watahiki A."/>
            <person name="Okamura-Oho Y."/>
            <person name="Suzuki H."/>
            <person name="Kawai J."/>
            <person name="Hayashizaki Y."/>
        </authorList>
    </citation>
    <scope>NUCLEOTIDE SEQUENCE [LARGE SCALE MRNA]</scope>
    <source>
        <strain>C57BL/6J</strain>
        <strain>NOD</strain>
        <tissue>Spleen</tissue>
        <tissue>Thymus</tissue>
    </source>
</reference>
<reference key="2">
    <citation type="journal article" date="2013" name="Biochem. Biophys. Res. Commun.">
        <title>Expression of orphan G-protein coupled receptor GPR174 in CHO cells induced morphological changes and proliferation delay via increasing intracellular cAMP.</title>
        <authorList>
            <person name="Sugita K."/>
            <person name="Yamamura C."/>
            <person name="Tabata K."/>
            <person name="Fujita N."/>
        </authorList>
    </citation>
    <scope>TISSUE SPECIFICITY</scope>
</reference>
<reference key="3">
    <citation type="journal article" date="2015" name="J. Exp. Med.">
        <title>The lysophosphatidylserine receptor GPR174 constrains regulatory T cell development and function.</title>
        <authorList>
            <person name="Barnes M.J."/>
            <person name="Li C.M."/>
            <person name="Xu Y."/>
            <person name="An J."/>
            <person name="Huang Y."/>
            <person name="Cyster J.G."/>
        </authorList>
    </citation>
    <scope>FUNCTION</scope>
    <scope>DISRUPTION PHENOTYPE</scope>
    <scope>TISSUE SPECIFICITY</scope>
</reference>
<reference key="4">
    <citation type="journal article" date="2018" name="Immunol. Cell Biol.">
        <title>Lysophosphatidylserine suppression of T-cell activation via GPR174 requires Galphas proteins.</title>
        <authorList>
            <person name="Barnes M.J."/>
            <person name="Cyster J.G."/>
        </authorList>
    </citation>
    <scope>FUNCTION</scope>
</reference>
<reference key="5">
    <citation type="journal article" date="2019" name="Cell Death Dis.">
        <title>Gpr174-deficient regulatory T cells decrease cytokine storm in septic mice.</title>
        <authorList>
            <person name="Qiu D."/>
            <person name="Chu X."/>
            <person name="Hua L."/>
            <person name="Yang Y."/>
            <person name="Li K."/>
            <person name="Han Y."/>
            <person name="Yin J."/>
            <person name="Zhu M."/>
            <person name="Mu S."/>
            <person name="Sun Z."/>
            <person name="Tong C."/>
            <person name="Song Z."/>
        </authorList>
    </citation>
    <scope>FUNCTION</scope>
    <scope>TISSUE SPECIFICITY</scope>
    <scope>DISRUPTION PHENOTYPE</scope>
</reference>
<reference key="6">
    <citation type="journal article" date="2020" name="Nature">
        <title>A GPR174-CCL21 module imparts sexual dimorphism to humoral immunity.</title>
        <authorList>
            <person name="Zhao R."/>
            <person name="Chen X."/>
            <person name="Ma W."/>
            <person name="Zhang J."/>
            <person name="Guo J."/>
            <person name="Zhong X."/>
            <person name="Yao J."/>
            <person name="Sun J."/>
            <person name="Rubinfien J."/>
            <person name="Zhou X."/>
            <person name="Wang J."/>
            <person name="Qi H."/>
        </authorList>
    </citation>
    <scope>FUNCTION</scope>
    <scope>INTERACTION WITH GNA13 AND CCL21</scope>
</reference>
<reference key="7">
    <citation type="journal article" date="2022" name="Proc. Natl. Acad. Sci. U.S.A.">
        <title>GPR174 signals via Galphas to control a CD86-containing gene expression program in B cells.</title>
        <authorList>
            <person name="Wolf E.W."/>
            <person name="Howard Z.P."/>
            <person name="Duan L."/>
            <person name="Tam H."/>
            <person name="Xu Y."/>
            <person name="Cyster J.G."/>
        </authorList>
    </citation>
    <scope>FUNCTION</scope>
    <scope>DISRUPTION PHENOTYPE</scope>
</reference>
<comment type="function">
    <text evidence="5 6 7 8 9">G-protein-coupled receptor of lysophosphatidylserine (LysoPS) that plays different roles in immune response. Plays a negative role in regulatory T-cell accumulation and homeostasis (PubMed:26077720). Under inflammatory conditions where LysoPS production increases, contributes to the down-regulation of regulatory T-cell activity to favor effector response (PubMed:26077720). Mediates the suppression of IL-2 production in activated T-lymphocytes leading to inhibition of growth, proliferation and differentiation of T-cells (PubMed:29457279). Mechanistically, acts via G(s)-containing heterotrimeric G proteins to trigger elevated cyclic AMP levels and protein kinase A/PKA activity, which may in turn act to antagonize proximal TCR signaling (PubMed:29457279). Plays an important role in the initial period of sepsis through the regulation of macrophage polarization and pro- and anti-inflammatory cytokine secretions (PubMed:30850582). Upon testosterone treatment, acts as a receptor for CCL21 and subsequently triggers through G(q)-alpha and G(12)/G(13) proteins a calcium flux leading to chemotactic effects on activated B-cells (PubMed:31875850). Signals via GNA13 and PKA to promote CD86 up-regulation by follicular B-cells (PubMed:35639700).</text>
</comment>
<comment type="subunit">
    <text evidence="8">Interacts with GNA13. Interacts with CCL21.</text>
</comment>
<comment type="subcellular location">
    <subcellularLocation>
        <location>Cell membrane</location>
        <topology>Multi-pass membrane protein</topology>
    </subcellularLocation>
</comment>
<comment type="tissue specificity">
    <text evidence="4 5 7">Expressed in spleen and, at low levels, in brain (PubMed:23178570). Highly expressed in developing and mature regulatory T-cells (PubMed:26077720, PubMed:30850582).</text>
</comment>
<comment type="disruption phenotype">
    <text evidence="5 7 9">GPR174 deficiency appears to favor regulatory T-cells cell accumulation in specific tissues (PubMed:26077720). Knock-out mice are resistant to inflammatory shock induced by lipopolysaccharide (LPS) and cecal ligation and puncture (CLP) (PubMed:30850582). GPR174-deficient B-cells have a defect in CD86 up-regulation (PubMed:35639700).</text>
</comment>
<comment type="similarity">
    <text evidence="3">Belongs to the G-protein coupled receptor 1 family.</text>
</comment>
<protein>
    <recommendedName>
        <fullName>Probable G-protein coupled receptor 174</fullName>
    </recommendedName>
</protein>
<keyword id="KW-1003">Cell membrane</keyword>
<keyword id="KW-1015">Disulfide bond</keyword>
<keyword id="KW-0297">G-protein coupled receptor</keyword>
<keyword id="KW-0325">Glycoprotein</keyword>
<keyword id="KW-0472">Membrane</keyword>
<keyword id="KW-0675">Receptor</keyword>
<keyword id="KW-1185">Reference proteome</keyword>
<keyword id="KW-0807">Transducer</keyword>
<keyword id="KW-0812">Transmembrane</keyword>
<keyword id="KW-1133">Transmembrane helix</keyword>
<feature type="chain" id="PRO_0000069655" description="Probable G-protein coupled receptor 174">
    <location>
        <begin position="1"/>
        <end position="335"/>
    </location>
</feature>
<feature type="topological domain" description="Extracellular" evidence="2">
    <location>
        <begin position="1"/>
        <end position="27"/>
    </location>
</feature>
<feature type="transmembrane region" description="Helical; Name=1" evidence="2">
    <location>
        <begin position="28"/>
        <end position="48"/>
    </location>
</feature>
<feature type="topological domain" description="Cytoplasmic" evidence="2">
    <location>
        <begin position="49"/>
        <end position="53"/>
    </location>
</feature>
<feature type="transmembrane region" description="Helical; Name=2" evidence="2">
    <location>
        <begin position="54"/>
        <end position="74"/>
    </location>
</feature>
<feature type="topological domain" description="Extracellular" evidence="2">
    <location>
        <begin position="75"/>
        <end position="91"/>
    </location>
</feature>
<feature type="transmembrane region" description="Helical; Name=3" evidence="2">
    <location>
        <begin position="92"/>
        <end position="112"/>
    </location>
</feature>
<feature type="topological domain" description="Cytoplasmic" evidence="2">
    <location>
        <begin position="113"/>
        <end position="134"/>
    </location>
</feature>
<feature type="transmembrane region" description="Helical; Name=4" evidence="2">
    <location>
        <begin position="135"/>
        <end position="155"/>
    </location>
</feature>
<feature type="topological domain" description="Extracellular" evidence="2">
    <location>
        <begin position="156"/>
        <end position="182"/>
    </location>
</feature>
<feature type="transmembrane region" description="Helical; Name=5" evidence="2">
    <location>
        <begin position="183"/>
        <end position="203"/>
    </location>
</feature>
<feature type="topological domain" description="Cytoplasmic" evidence="2">
    <location>
        <begin position="204"/>
        <end position="231"/>
    </location>
</feature>
<feature type="transmembrane region" description="Helical; Name=6" evidence="2">
    <location>
        <begin position="232"/>
        <end position="252"/>
    </location>
</feature>
<feature type="topological domain" description="Extracellular" evidence="2">
    <location>
        <begin position="253"/>
        <end position="268"/>
    </location>
</feature>
<feature type="transmembrane region" description="Helical; Name=7" evidence="2">
    <location>
        <begin position="269"/>
        <end position="289"/>
    </location>
</feature>
<feature type="topological domain" description="Cytoplasmic" evidence="2">
    <location>
        <begin position="290"/>
        <end position="335"/>
    </location>
</feature>
<feature type="glycosylation site" description="N-linked (GlcNAc...) asparagine" evidence="2">
    <location>
        <position position="4"/>
    </location>
</feature>
<feature type="glycosylation site" description="N-linked (GlcNAc...) asparagine" evidence="2">
    <location>
        <position position="8"/>
    </location>
</feature>
<feature type="glycosylation site" description="N-linked (GlcNAc...) asparagine" evidence="2">
    <location>
        <position position="164"/>
    </location>
</feature>
<feature type="disulfide bond" evidence="1">
    <location>
        <begin position="91"/>
        <end position="168"/>
    </location>
</feature>
<dbReference type="EMBL" id="AK153611">
    <property type="protein sequence ID" value="BAE32116.1"/>
    <property type="molecule type" value="mRNA"/>
</dbReference>
<dbReference type="EMBL" id="AK153950">
    <property type="protein sequence ID" value="BAE32273.1"/>
    <property type="molecule type" value="mRNA"/>
</dbReference>
<dbReference type="EMBL" id="AK156069">
    <property type="protein sequence ID" value="BAE33570.1"/>
    <property type="molecule type" value="mRNA"/>
</dbReference>
<dbReference type="EMBL" id="AK171832">
    <property type="protein sequence ID" value="BAE42688.1"/>
    <property type="molecule type" value="mRNA"/>
</dbReference>
<dbReference type="CCDS" id="CCDS30348.1"/>
<dbReference type="RefSeq" id="NP_001028423.1">
    <property type="nucleotide sequence ID" value="NM_001033251.5"/>
</dbReference>
<dbReference type="RefSeq" id="NP_001171252.1">
    <property type="nucleotide sequence ID" value="NM_001177781.1"/>
</dbReference>
<dbReference type="RefSeq" id="NP_001171253.1">
    <property type="nucleotide sequence ID" value="NM_001177782.1"/>
</dbReference>
<dbReference type="RefSeq" id="NP_001345676.1">
    <property type="nucleotide sequence ID" value="NM_001358747.1"/>
</dbReference>
<dbReference type="SMR" id="Q3U507"/>
<dbReference type="FunCoup" id="Q3U507">
    <property type="interactions" value="272"/>
</dbReference>
<dbReference type="STRING" id="10090.ENSMUSP00000113032"/>
<dbReference type="BindingDB" id="Q3U507"/>
<dbReference type="ChEMBL" id="CHEMBL3813587"/>
<dbReference type="GlyCosmos" id="Q3U507">
    <property type="glycosylation" value="3 sites, No reported glycans"/>
</dbReference>
<dbReference type="GlyGen" id="Q3U507">
    <property type="glycosylation" value="3 sites"/>
</dbReference>
<dbReference type="iPTMnet" id="Q3U507"/>
<dbReference type="PhosphoSitePlus" id="Q3U507"/>
<dbReference type="PaxDb" id="10090-ENSMUSP00000098852"/>
<dbReference type="ProteomicsDB" id="263387"/>
<dbReference type="Antibodypedia" id="14113">
    <property type="antibodies" value="254 antibodies from 29 providers"/>
</dbReference>
<dbReference type="Ensembl" id="ENSMUST00000101294.9">
    <property type="protein sequence ID" value="ENSMUSP00000098852.3"/>
    <property type="gene ID" value="ENSMUSG00000073008.12"/>
</dbReference>
<dbReference type="Ensembl" id="ENSMUST00000117310.8">
    <property type="protein sequence ID" value="ENSMUSP00000112808.2"/>
    <property type="gene ID" value="ENSMUSG00000073008.12"/>
</dbReference>
<dbReference type="Ensembl" id="ENSMUST00000118820.8">
    <property type="protein sequence ID" value="ENSMUSP00000113032.2"/>
    <property type="gene ID" value="ENSMUSG00000073008.12"/>
</dbReference>
<dbReference type="Ensembl" id="ENSMUST00000120971.8">
    <property type="protein sequence ID" value="ENSMUSP00000112974.2"/>
    <property type="gene ID" value="ENSMUSG00000073008.12"/>
</dbReference>
<dbReference type="Ensembl" id="ENSMUST00000178838.2">
    <property type="protein sequence ID" value="ENSMUSP00000137372.2"/>
    <property type="gene ID" value="ENSMUSG00000073008.12"/>
</dbReference>
<dbReference type="GeneID" id="213439"/>
<dbReference type="KEGG" id="mmu:213439"/>
<dbReference type="UCSC" id="uc009ucd.2">
    <property type="organism name" value="mouse"/>
</dbReference>
<dbReference type="AGR" id="MGI:2685222"/>
<dbReference type="CTD" id="84636"/>
<dbReference type="MGI" id="MGI:2685222">
    <property type="gene designation" value="Gpr174"/>
</dbReference>
<dbReference type="VEuPathDB" id="HostDB:ENSMUSG00000073008"/>
<dbReference type="eggNOG" id="ENOG502QSC0">
    <property type="taxonomic scope" value="Eukaryota"/>
</dbReference>
<dbReference type="GeneTree" id="ENSGT01030000234518"/>
<dbReference type="HOGENOM" id="CLU_009579_8_2_1"/>
<dbReference type="InParanoid" id="Q3U507"/>
<dbReference type="OMA" id="YLFLMHP"/>
<dbReference type="OrthoDB" id="9435792at2759"/>
<dbReference type="PhylomeDB" id="Q3U507"/>
<dbReference type="TreeFam" id="TF350009"/>
<dbReference type="BioGRID-ORCS" id="213439">
    <property type="hits" value="3 hits in 77 CRISPR screens"/>
</dbReference>
<dbReference type="ChiTaRS" id="Gpr174">
    <property type="organism name" value="mouse"/>
</dbReference>
<dbReference type="PRO" id="PR:Q3U507"/>
<dbReference type="Proteomes" id="UP000000589">
    <property type="component" value="Chromosome X"/>
</dbReference>
<dbReference type="RNAct" id="Q3U507">
    <property type="molecule type" value="protein"/>
</dbReference>
<dbReference type="Bgee" id="ENSMUSG00000073008">
    <property type="expression patterns" value="Expressed in peripheral lymph node and 41 other cell types or tissues"/>
</dbReference>
<dbReference type="GO" id="GO:0034451">
    <property type="term" value="C:centriolar satellite"/>
    <property type="evidence" value="ECO:0007669"/>
    <property type="project" value="Ensembl"/>
</dbReference>
<dbReference type="GO" id="GO:0043231">
    <property type="term" value="C:intracellular membrane-bounded organelle"/>
    <property type="evidence" value="ECO:0007669"/>
    <property type="project" value="Ensembl"/>
</dbReference>
<dbReference type="GO" id="GO:0005886">
    <property type="term" value="C:plasma membrane"/>
    <property type="evidence" value="ECO:0000305"/>
    <property type="project" value="MGI"/>
</dbReference>
<dbReference type="GO" id="GO:0045125">
    <property type="term" value="F:bioactive lipid receptor activity"/>
    <property type="evidence" value="ECO:0000315"/>
    <property type="project" value="MGI"/>
</dbReference>
<dbReference type="GO" id="GO:0032703">
    <property type="term" value="P:negative regulation of interleukin-2 production"/>
    <property type="evidence" value="ECO:0007669"/>
    <property type="project" value="Ensembl"/>
</dbReference>
<dbReference type="GO" id="GO:0043029">
    <property type="term" value="P:T cell homeostasis"/>
    <property type="evidence" value="ECO:0000315"/>
    <property type="project" value="MGI"/>
</dbReference>
<dbReference type="CDD" id="cd15152">
    <property type="entry name" value="7tmA_GPR174-like"/>
    <property type="match status" value="1"/>
</dbReference>
<dbReference type="FunFam" id="1.20.1070.10:FF:000167">
    <property type="entry name" value="probable G-protein coupled receptor 174"/>
    <property type="match status" value="1"/>
</dbReference>
<dbReference type="Gene3D" id="1.20.1070.10">
    <property type="entry name" value="Rhodopsin 7-helix transmembrane proteins"/>
    <property type="match status" value="1"/>
</dbReference>
<dbReference type="InterPro" id="IPR000276">
    <property type="entry name" value="GPCR_Rhodpsn"/>
</dbReference>
<dbReference type="InterPro" id="IPR017452">
    <property type="entry name" value="GPCR_Rhodpsn_7TM"/>
</dbReference>
<dbReference type="InterPro" id="IPR047836">
    <property type="entry name" value="GPR174_7tmA"/>
</dbReference>
<dbReference type="PANTHER" id="PTHR24232">
    <property type="entry name" value="G-PROTEIN COUPLED RECEPTOR"/>
    <property type="match status" value="1"/>
</dbReference>
<dbReference type="PANTHER" id="PTHR24232:SF86">
    <property type="entry name" value="G-PROTEIN COUPLED RECEPTOR 174-RELATED"/>
    <property type="match status" value="1"/>
</dbReference>
<dbReference type="Pfam" id="PF00001">
    <property type="entry name" value="7tm_1"/>
    <property type="match status" value="1"/>
</dbReference>
<dbReference type="PRINTS" id="PR00237">
    <property type="entry name" value="GPCRRHODOPSN"/>
</dbReference>
<dbReference type="PRINTS" id="PR01157">
    <property type="entry name" value="P2YPURNOCPTR"/>
</dbReference>
<dbReference type="SUPFAM" id="SSF81321">
    <property type="entry name" value="Family A G protein-coupled receptor-like"/>
    <property type="match status" value="1"/>
</dbReference>
<dbReference type="PROSITE" id="PS50262">
    <property type="entry name" value="G_PROTEIN_RECEP_F1_2"/>
    <property type="match status" value="1"/>
</dbReference>